<comment type="function">
    <text evidence="1">Catalyzes the 2-thiolation of uridine at the wobble position (U34) of tRNA, leading to the formation of s(2)U34.</text>
</comment>
<comment type="catalytic activity">
    <reaction evidence="1">
        <text>S-sulfanyl-L-cysteinyl-[protein] + uridine(34) in tRNA + AH2 + ATP = 2-thiouridine(34) in tRNA + L-cysteinyl-[protein] + A + AMP + diphosphate + H(+)</text>
        <dbReference type="Rhea" id="RHEA:47032"/>
        <dbReference type="Rhea" id="RHEA-COMP:10131"/>
        <dbReference type="Rhea" id="RHEA-COMP:11726"/>
        <dbReference type="Rhea" id="RHEA-COMP:11727"/>
        <dbReference type="Rhea" id="RHEA-COMP:11728"/>
        <dbReference type="ChEBI" id="CHEBI:13193"/>
        <dbReference type="ChEBI" id="CHEBI:15378"/>
        <dbReference type="ChEBI" id="CHEBI:17499"/>
        <dbReference type="ChEBI" id="CHEBI:29950"/>
        <dbReference type="ChEBI" id="CHEBI:30616"/>
        <dbReference type="ChEBI" id="CHEBI:33019"/>
        <dbReference type="ChEBI" id="CHEBI:61963"/>
        <dbReference type="ChEBI" id="CHEBI:65315"/>
        <dbReference type="ChEBI" id="CHEBI:87170"/>
        <dbReference type="ChEBI" id="CHEBI:456215"/>
        <dbReference type="EC" id="2.8.1.13"/>
    </reaction>
</comment>
<comment type="subcellular location">
    <subcellularLocation>
        <location evidence="1">Cytoplasm</location>
    </subcellularLocation>
</comment>
<comment type="similarity">
    <text evidence="1">Belongs to the MnmA/TRMU family.</text>
</comment>
<name>MNMA_RHIME</name>
<dbReference type="EC" id="2.8.1.13" evidence="1"/>
<dbReference type="EMBL" id="AL591688">
    <property type="protein sequence ID" value="CAC47292.1"/>
    <property type="molecule type" value="Genomic_DNA"/>
</dbReference>
<dbReference type="RefSeq" id="NP_386819.1">
    <property type="nucleotide sequence ID" value="NC_003047.1"/>
</dbReference>
<dbReference type="RefSeq" id="WP_010970150.1">
    <property type="nucleotide sequence ID" value="NC_003047.1"/>
</dbReference>
<dbReference type="SMR" id="Q92MB5"/>
<dbReference type="EnsemblBacteria" id="CAC47292">
    <property type="protein sequence ID" value="CAC47292"/>
    <property type="gene ID" value="SMc00659"/>
</dbReference>
<dbReference type="KEGG" id="sme:SMc00659"/>
<dbReference type="PATRIC" id="fig|266834.11.peg.4217"/>
<dbReference type="eggNOG" id="COG0482">
    <property type="taxonomic scope" value="Bacteria"/>
</dbReference>
<dbReference type="HOGENOM" id="CLU_035188_0_1_5"/>
<dbReference type="OrthoDB" id="9800696at2"/>
<dbReference type="Proteomes" id="UP000001976">
    <property type="component" value="Chromosome"/>
</dbReference>
<dbReference type="GO" id="GO:0005737">
    <property type="term" value="C:cytoplasm"/>
    <property type="evidence" value="ECO:0007669"/>
    <property type="project" value="UniProtKB-SubCell"/>
</dbReference>
<dbReference type="GO" id="GO:0005524">
    <property type="term" value="F:ATP binding"/>
    <property type="evidence" value="ECO:0007669"/>
    <property type="project" value="UniProtKB-KW"/>
</dbReference>
<dbReference type="GO" id="GO:0000049">
    <property type="term" value="F:tRNA binding"/>
    <property type="evidence" value="ECO:0007669"/>
    <property type="project" value="UniProtKB-KW"/>
</dbReference>
<dbReference type="GO" id="GO:0103016">
    <property type="term" value="F:tRNA-uridine 2-sulfurtransferase activity"/>
    <property type="evidence" value="ECO:0007669"/>
    <property type="project" value="UniProtKB-EC"/>
</dbReference>
<dbReference type="GO" id="GO:0002143">
    <property type="term" value="P:tRNA wobble position uridine thiolation"/>
    <property type="evidence" value="ECO:0007669"/>
    <property type="project" value="TreeGrafter"/>
</dbReference>
<dbReference type="CDD" id="cd01998">
    <property type="entry name" value="MnmA_TRMU-like"/>
    <property type="match status" value="1"/>
</dbReference>
<dbReference type="FunFam" id="3.40.50.620:FF:000115">
    <property type="entry name" value="tRNA-specific 2-thiouridylase MnmA"/>
    <property type="match status" value="1"/>
</dbReference>
<dbReference type="Gene3D" id="2.30.30.280">
    <property type="entry name" value="Adenine nucleotide alpha hydrolases-like domains"/>
    <property type="match status" value="1"/>
</dbReference>
<dbReference type="Gene3D" id="3.40.50.620">
    <property type="entry name" value="HUPs"/>
    <property type="match status" value="1"/>
</dbReference>
<dbReference type="Gene3D" id="2.40.30.10">
    <property type="entry name" value="Translation factors"/>
    <property type="match status" value="1"/>
</dbReference>
<dbReference type="HAMAP" id="MF_00144">
    <property type="entry name" value="tRNA_thiouridyl_MnmA"/>
    <property type="match status" value="1"/>
</dbReference>
<dbReference type="InterPro" id="IPR004506">
    <property type="entry name" value="MnmA-like"/>
</dbReference>
<dbReference type="InterPro" id="IPR046885">
    <property type="entry name" value="MnmA-like_C"/>
</dbReference>
<dbReference type="InterPro" id="IPR046884">
    <property type="entry name" value="MnmA-like_central"/>
</dbReference>
<dbReference type="InterPro" id="IPR023382">
    <property type="entry name" value="MnmA-like_central_sf"/>
</dbReference>
<dbReference type="InterPro" id="IPR014729">
    <property type="entry name" value="Rossmann-like_a/b/a_fold"/>
</dbReference>
<dbReference type="NCBIfam" id="NF001138">
    <property type="entry name" value="PRK00143.1"/>
    <property type="match status" value="1"/>
</dbReference>
<dbReference type="NCBIfam" id="TIGR00420">
    <property type="entry name" value="trmU"/>
    <property type="match status" value="1"/>
</dbReference>
<dbReference type="PANTHER" id="PTHR11933:SF5">
    <property type="entry name" value="MITOCHONDRIAL TRNA-SPECIFIC 2-THIOURIDYLASE 1"/>
    <property type="match status" value="1"/>
</dbReference>
<dbReference type="PANTHER" id="PTHR11933">
    <property type="entry name" value="TRNA 5-METHYLAMINOMETHYL-2-THIOURIDYLATE -METHYLTRANSFERASE"/>
    <property type="match status" value="1"/>
</dbReference>
<dbReference type="Pfam" id="PF03054">
    <property type="entry name" value="tRNA_Me_trans"/>
    <property type="match status" value="1"/>
</dbReference>
<dbReference type="Pfam" id="PF20258">
    <property type="entry name" value="tRNA_Me_trans_C"/>
    <property type="match status" value="1"/>
</dbReference>
<dbReference type="Pfam" id="PF20259">
    <property type="entry name" value="tRNA_Me_trans_M"/>
    <property type="match status" value="1"/>
</dbReference>
<dbReference type="SUPFAM" id="SSF52402">
    <property type="entry name" value="Adenine nucleotide alpha hydrolases-like"/>
    <property type="match status" value="1"/>
</dbReference>
<keyword id="KW-0067">ATP-binding</keyword>
<keyword id="KW-0963">Cytoplasm</keyword>
<keyword id="KW-1015">Disulfide bond</keyword>
<keyword id="KW-0547">Nucleotide-binding</keyword>
<keyword id="KW-1185">Reference proteome</keyword>
<keyword id="KW-0694">RNA-binding</keyword>
<keyword id="KW-0808">Transferase</keyword>
<keyword id="KW-0819">tRNA processing</keyword>
<keyword id="KW-0820">tRNA-binding</keyword>
<protein>
    <recommendedName>
        <fullName evidence="1">tRNA-specific 2-thiouridylase MnmA</fullName>
        <ecNumber evidence="1">2.8.1.13</ecNumber>
    </recommendedName>
</protein>
<accession>Q92MB5</accession>
<reference key="1">
    <citation type="journal article" date="2001" name="Proc. Natl. Acad. Sci. U.S.A.">
        <title>Analysis of the chromosome sequence of the legume symbiont Sinorhizobium meliloti strain 1021.</title>
        <authorList>
            <person name="Capela D."/>
            <person name="Barloy-Hubler F."/>
            <person name="Gouzy J."/>
            <person name="Bothe G."/>
            <person name="Ampe F."/>
            <person name="Batut J."/>
            <person name="Boistard P."/>
            <person name="Becker A."/>
            <person name="Boutry M."/>
            <person name="Cadieu E."/>
            <person name="Dreano S."/>
            <person name="Gloux S."/>
            <person name="Godrie T."/>
            <person name="Goffeau A."/>
            <person name="Kahn D."/>
            <person name="Kiss E."/>
            <person name="Lelaure V."/>
            <person name="Masuy D."/>
            <person name="Pohl T."/>
            <person name="Portetelle D."/>
            <person name="Puehler A."/>
            <person name="Purnelle B."/>
            <person name="Ramsperger U."/>
            <person name="Renard C."/>
            <person name="Thebault P."/>
            <person name="Vandenbol M."/>
            <person name="Weidner S."/>
            <person name="Galibert F."/>
        </authorList>
    </citation>
    <scope>NUCLEOTIDE SEQUENCE [LARGE SCALE GENOMIC DNA]</scope>
    <source>
        <strain>1021</strain>
    </source>
</reference>
<reference key="2">
    <citation type="journal article" date="2001" name="Science">
        <title>The composite genome of the legume symbiont Sinorhizobium meliloti.</title>
        <authorList>
            <person name="Galibert F."/>
            <person name="Finan T.M."/>
            <person name="Long S.R."/>
            <person name="Puehler A."/>
            <person name="Abola P."/>
            <person name="Ampe F."/>
            <person name="Barloy-Hubler F."/>
            <person name="Barnett M.J."/>
            <person name="Becker A."/>
            <person name="Boistard P."/>
            <person name="Bothe G."/>
            <person name="Boutry M."/>
            <person name="Bowser L."/>
            <person name="Buhrmester J."/>
            <person name="Cadieu E."/>
            <person name="Capela D."/>
            <person name="Chain P."/>
            <person name="Cowie A."/>
            <person name="Davis R.W."/>
            <person name="Dreano S."/>
            <person name="Federspiel N.A."/>
            <person name="Fisher R.F."/>
            <person name="Gloux S."/>
            <person name="Godrie T."/>
            <person name="Goffeau A."/>
            <person name="Golding B."/>
            <person name="Gouzy J."/>
            <person name="Gurjal M."/>
            <person name="Hernandez-Lucas I."/>
            <person name="Hong A."/>
            <person name="Huizar L."/>
            <person name="Hyman R.W."/>
            <person name="Jones T."/>
            <person name="Kahn D."/>
            <person name="Kahn M.L."/>
            <person name="Kalman S."/>
            <person name="Keating D.H."/>
            <person name="Kiss E."/>
            <person name="Komp C."/>
            <person name="Lelaure V."/>
            <person name="Masuy D."/>
            <person name="Palm C."/>
            <person name="Peck M.C."/>
            <person name="Pohl T.M."/>
            <person name="Portetelle D."/>
            <person name="Purnelle B."/>
            <person name="Ramsperger U."/>
            <person name="Surzycki R."/>
            <person name="Thebault P."/>
            <person name="Vandenbol M."/>
            <person name="Vorhoelter F.J."/>
            <person name="Weidner S."/>
            <person name="Wells D.H."/>
            <person name="Wong K."/>
            <person name="Yeh K.-C."/>
            <person name="Batut J."/>
        </authorList>
    </citation>
    <scope>NUCLEOTIDE SEQUENCE [LARGE SCALE GENOMIC DNA]</scope>
    <source>
        <strain>1021</strain>
    </source>
</reference>
<organism>
    <name type="scientific">Rhizobium meliloti (strain 1021)</name>
    <name type="common">Ensifer meliloti</name>
    <name type="synonym">Sinorhizobium meliloti</name>
    <dbReference type="NCBI Taxonomy" id="266834"/>
    <lineage>
        <taxon>Bacteria</taxon>
        <taxon>Pseudomonadati</taxon>
        <taxon>Pseudomonadota</taxon>
        <taxon>Alphaproteobacteria</taxon>
        <taxon>Hyphomicrobiales</taxon>
        <taxon>Rhizobiaceae</taxon>
        <taxon>Sinorhizobium/Ensifer group</taxon>
        <taxon>Sinorhizobium</taxon>
    </lineage>
</organism>
<sequence length="398" mass="43051">MNSLDFDRKPEDTRVVVAMSGGVDSSVVAGLLKREGYDVLGITLQLYDHGAAVHRAGSCCAGQDIDDARRVCETIGIPHYVLDYEARFRETVINPFAESYIAGETPIPCVACNQTVKFADLLATAKELGADALATGHYIRSRPSPKPRYAGQRALYRPADAERDQSYFLFATTQEQIDYLRFPLGGLPKSETRALAEEMGLVVAKKADSQDICFVPQGKYSDIVSKLKPNAALAGEIVHLDGRVLGAHEGILHYTIGQRRGIGVATGEPLYVVYLDSRSRRVIVGPKEALETRRVYLRDVNWLGDEELEAAAGQGFECFAKVRSTRRPAPAVLKSDAEGLYVELVEGEAGVAPGQACALYSGTGEDARVYGGGFIRRSEREPAAEAALKALLQAPAAA</sequence>
<proteinExistence type="inferred from homology"/>
<evidence type="ECO:0000255" key="1">
    <source>
        <dbReference type="HAMAP-Rule" id="MF_00144"/>
    </source>
</evidence>
<gene>
    <name evidence="1" type="primary">mnmA</name>
    <name type="synonym">trmU</name>
    <name type="ordered locus">R02713</name>
    <name type="ORF">SMc00659</name>
</gene>
<feature type="chain" id="PRO_0000121667" description="tRNA-specific 2-thiouridylase MnmA">
    <location>
        <begin position="1"/>
        <end position="398"/>
    </location>
</feature>
<feature type="region of interest" description="Interaction with tRNA" evidence="1">
    <location>
        <begin position="163"/>
        <end position="165"/>
    </location>
</feature>
<feature type="active site" description="Nucleophile" evidence="1">
    <location>
        <position position="112"/>
    </location>
</feature>
<feature type="active site" description="Cysteine persulfide intermediate" evidence="1">
    <location>
        <position position="213"/>
    </location>
</feature>
<feature type="binding site" evidence="1">
    <location>
        <begin position="18"/>
        <end position="25"/>
    </location>
    <ligand>
        <name>ATP</name>
        <dbReference type="ChEBI" id="CHEBI:30616"/>
    </ligand>
</feature>
<feature type="binding site" evidence="1">
    <location>
        <position position="44"/>
    </location>
    <ligand>
        <name>ATP</name>
        <dbReference type="ChEBI" id="CHEBI:30616"/>
    </ligand>
</feature>
<feature type="binding site" evidence="1">
    <location>
        <position position="136"/>
    </location>
    <ligand>
        <name>ATP</name>
        <dbReference type="ChEBI" id="CHEBI:30616"/>
    </ligand>
</feature>
<feature type="site" description="Interaction with tRNA" evidence="1">
    <location>
        <position position="137"/>
    </location>
</feature>
<feature type="site" description="Interaction with tRNA" evidence="1">
    <location>
        <position position="355"/>
    </location>
</feature>
<feature type="disulfide bond" description="Alternate" evidence="1">
    <location>
        <begin position="112"/>
        <end position="213"/>
    </location>
</feature>